<gene>
    <name evidence="1" type="primary">queF</name>
    <name type="ordered locus">BCA_1398</name>
</gene>
<evidence type="ECO:0000255" key="1">
    <source>
        <dbReference type="HAMAP-Rule" id="MF_00818"/>
    </source>
</evidence>
<accession>C1EM52</accession>
<sequence>MAGRLDEDLKDVTLLGNQNTKYLFEYSPEILEVFDNNHPNRDYFVKFNCPEFTSLCPKTGQPDFATIYISYIPEQRMVESKSLKLYLFSFRNHGDFHEDCMNVIMNDLIKLMDPRYIEVWGKFTPRGGISIDPYCNYGRPGTKYEQMADYRMMNHDLYPETIDNR</sequence>
<feature type="chain" id="PRO_1000148666" description="NADPH-dependent 7-cyano-7-deazaguanine reductase">
    <location>
        <begin position="1"/>
        <end position="165"/>
    </location>
</feature>
<feature type="active site" description="Thioimide intermediate" evidence="1">
    <location>
        <position position="56"/>
    </location>
</feature>
<feature type="active site" description="Proton donor" evidence="1">
    <location>
        <position position="63"/>
    </location>
</feature>
<feature type="binding site" evidence="1">
    <location>
        <begin position="78"/>
        <end position="80"/>
    </location>
    <ligand>
        <name>substrate</name>
    </ligand>
</feature>
<feature type="binding site" evidence="1">
    <location>
        <begin position="97"/>
        <end position="98"/>
    </location>
    <ligand>
        <name>substrate</name>
    </ligand>
</feature>
<dbReference type="EC" id="1.7.1.13" evidence="1"/>
<dbReference type="EMBL" id="CP001407">
    <property type="protein sequence ID" value="ACO28987.1"/>
    <property type="molecule type" value="Genomic_DNA"/>
</dbReference>
<dbReference type="RefSeq" id="WP_000918895.1">
    <property type="nucleotide sequence ID" value="NZ_CP009318.1"/>
</dbReference>
<dbReference type="SMR" id="C1EM52"/>
<dbReference type="GeneID" id="93009696"/>
<dbReference type="KEGG" id="bcx:BCA_1398"/>
<dbReference type="PATRIC" id="fig|572264.18.peg.1348"/>
<dbReference type="UniPathway" id="UPA00392"/>
<dbReference type="Proteomes" id="UP000002210">
    <property type="component" value="Chromosome"/>
</dbReference>
<dbReference type="GO" id="GO:0005737">
    <property type="term" value="C:cytoplasm"/>
    <property type="evidence" value="ECO:0007669"/>
    <property type="project" value="UniProtKB-SubCell"/>
</dbReference>
<dbReference type="GO" id="GO:0033739">
    <property type="term" value="F:preQ1 synthase activity"/>
    <property type="evidence" value="ECO:0007669"/>
    <property type="project" value="UniProtKB-UniRule"/>
</dbReference>
<dbReference type="GO" id="GO:0008616">
    <property type="term" value="P:queuosine biosynthetic process"/>
    <property type="evidence" value="ECO:0007669"/>
    <property type="project" value="UniProtKB-UniRule"/>
</dbReference>
<dbReference type="GO" id="GO:0006400">
    <property type="term" value="P:tRNA modification"/>
    <property type="evidence" value="ECO:0007669"/>
    <property type="project" value="UniProtKB-UniRule"/>
</dbReference>
<dbReference type="Gene3D" id="3.30.1130.10">
    <property type="match status" value="1"/>
</dbReference>
<dbReference type="HAMAP" id="MF_00818">
    <property type="entry name" value="QueF_type1"/>
    <property type="match status" value="1"/>
</dbReference>
<dbReference type="InterPro" id="IPR043133">
    <property type="entry name" value="GTP-CH-I_C/QueF"/>
</dbReference>
<dbReference type="InterPro" id="IPR050084">
    <property type="entry name" value="NADPH_dep_7-cyano-7-deazaG_red"/>
</dbReference>
<dbReference type="InterPro" id="IPR029500">
    <property type="entry name" value="QueF"/>
</dbReference>
<dbReference type="InterPro" id="IPR016856">
    <property type="entry name" value="QueF_type1"/>
</dbReference>
<dbReference type="NCBIfam" id="TIGR03139">
    <property type="entry name" value="QueF-II"/>
    <property type="match status" value="1"/>
</dbReference>
<dbReference type="PANTHER" id="PTHR34354">
    <property type="entry name" value="NADPH-DEPENDENT 7-CYANO-7-DEAZAGUANINE REDUCTASE"/>
    <property type="match status" value="1"/>
</dbReference>
<dbReference type="PANTHER" id="PTHR34354:SF1">
    <property type="entry name" value="NADPH-DEPENDENT 7-CYANO-7-DEAZAGUANINE REDUCTASE"/>
    <property type="match status" value="1"/>
</dbReference>
<dbReference type="Pfam" id="PF14489">
    <property type="entry name" value="QueF"/>
    <property type="match status" value="1"/>
</dbReference>
<dbReference type="PIRSF" id="PIRSF027377">
    <property type="entry name" value="Nitrile_oxidored_QueF"/>
    <property type="match status" value="1"/>
</dbReference>
<dbReference type="SUPFAM" id="SSF55620">
    <property type="entry name" value="Tetrahydrobiopterin biosynthesis enzymes-like"/>
    <property type="match status" value="1"/>
</dbReference>
<name>QUEF_BACC3</name>
<organism>
    <name type="scientific">Bacillus cereus (strain 03BB102)</name>
    <dbReference type="NCBI Taxonomy" id="572264"/>
    <lineage>
        <taxon>Bacteria</taxon>
        <taxon>Bacillati</taxon>
        <taxon>Bacillota</taxon>
        <taxon>Bacilli</taxon>
        <taxon>Bacillales</taxon>
        <taxon>Bacillaceae</taxon>
        <taxon>Bacillus</taxon>
        <taxon>Bacillus cereus group</taxon>
    </lineage>
</organism>
<keyword id="KW-0963">Cytoplasm</keyword>
<keyword id="KW-0521">NADP</keyword>
<keyword id="KW-0560">Oxidoreductase</keyword>
<keyword id="KW-0671">Queuosine biosynthesis</keyword>
<reference key="1">
    <citation type="submission" date="2009-02" db="EMBL/GenBank/DDBJ databases">
        <title>Genome sequence of Bacillus cereus 03BB102.</title>
        <authorList>
            <person name="Dodson R.J."/>
            <person name="Jackson P."/>
            <person name="Munk A.C."/>
            <person name="Brettin T."/>
            <person name="Bruce D."/>
            <person name="Detter C."/>
            <person name="Tapia R."/>
            <person name="Han C."/>
            <person name="Sutton G."/>
            <person name="Sims D."/>
        </authorList>
    </citation>
    <scope>NUCLEOTIDE SEQUENCE [LARGE SCALE GENOMIC DNA]</scope>
    <source>
        <strain>03BB102</strain>
    </source>
</reference>
<comment type="function">
    <text evidence="1">Catalyzes the NADPH-dependent reduction of 7-cyano-7-deazaguanine (preQ0) to 7-aminomethyl-7-deazaguanine (preQ1).</text>
</comment>
<comment type="catalytic activity">
    <reaction evidence="1">
        <text>7-aminomethyl-7-carbaguanine + 2 NADP(+) = 7-cyano-7-deazaguanine + 2 NADPH + 3 H(+)</text>
        <dbReference type="Rhea" id="RHEA:13409"/>
        <dbReference type="ChEBI" id="CHEBI:15378"/>
        <dbReference type="ChEBI" id="CHEBI:45075"/>
        <dbReference type="ChEBI" id="CHEBI:57783"/>
        <dbReference type="ChEBI" id="CHEBI:58349"/>
        <dbReference type="ChEBI" id="CHEBI:58703"/>
        <dbReference type="EC" id="1.7.1.13"/>
    </reaction>
</comment>
<comment type="pathway">
    <text evidence="1">tRNA modification; tRNA-queuosine biosynthesis.</text>
</comment>
<comment type="subcellular location">
    <subcellularLocation>
        <location evidence="1">Cytoplasm</location>
    </subcellularLocation>
</comment>
<comment type="similarity">
    <text evidence="1">Belongs to the GTP cyclohydrolase I family. QueF type 1 subfamily.</text>
</comment>
<protein>
    <recommendedName>
        <fullName evidence="1">NADPH-dependent 7-cyano-7-deazaguanine reductase</fullName>
        <ecNumber evidence="1">1.7.1.13</ecNumber>
    </recommendedName>
    <alternativeName>
        <fullName evidence="1">7-cyano-7-carbaguanine reductase</fullName>
    </alternativeName>
    <alternativeName>
        <fullName evidence="1">NADPH-dependent nitrile oxidoreductase</fullName>
    </alternativeName>
    <alternativeName>
        <fullName evidence="1">PreQ(0) reductase</fullName>
    </alternativeName>
</protein>
<proteinExistence type="inferred from homology"/>